<protein>
    <recommendedName>
        <fullName evidence="2">N(4)-acetylcytidine amidohydrolase</fullName>
        <shortName evidence="2">ac4C amidohydrolase</shortName>
        <ecNumber evidence="2">3.5.1.135</ecNumber>
    </recommendedName>
</protein>
<gene>
    <name type="ordered locus">YPK_2444</name>
</gene>
<proteinExistence type="inferred from homology"/>
<reference key="1">
    <citation type="submission" date="2008-02" db="EMBL/GenBank/DDBJ databases">
        <title>Complete sequence of Yersinia pseudotuberculosis YPIII.</title>
        <authorList>
            <consortium name="US DOE Joint Genome Institute"/>
            <person name="Copeland A."/>
            <person name="Lucas S."/>
            <person name="Lapidus A."/>
            <person name="Glavina del Rio T."/>
            <person name="Dalin E."/>
            <person name="Tice H."/>
            <person name="Bruce D."/>
            <person name="Goodwin L."/>
            <person name="Pitluck S."/>
            <person name="Munk A.C."/>
            <person name="Brettin T."/>
            <person name="Detter J.C."/>
            <person name="Han C."/>
            <person name="Tapia R."/>
            <person name="Schmutz J."/>
            <person name="Larimer F."/>
            <person name="Land M."/>
            <person name="Hauser L."/>
            <person name="Challacombe J.F."/>
            <person name="Green L."/>
            <person name="Lindler L.E."/>
            <person name="Nikolich M.P."/>
            <person name="Richardson P."/>
        </authorList>
    </citation>
    <scope>NUCLEOTIDE SEQUENCE [LARGE SCALE GENOMIC DNA]</scope>
    <source>
        <strain>YPIII</strain>
    </source>
</reference>
<feature type="chain" id="PRO_1000131803" description="N(4)-acetylcytidine amidohydrolase">
    <location>
        <begin position="1"/>
        <end position="102"/>
    </location>
</feature>
<feature type="domain" description="ASCH" evidence="1">
    <location>
        <begin position="6"/>
        <end position="92"/>
    </location>
</feature>
<feature type="active site" description="Proton acceptor" evidence="2">
    <location>
        <position position="20"/>
    </location>
</feature>
<feature type="active site" description="Nucleophile" evidence="2">
    <location>
        <position position="23"/>
    </location>
</feature>
<feature type="active site" description="Proton donor" evidence="2">
    <location>
        <position position="73"/>
    </location>
</feature>
<dbReference type="EC" id="3.5.1.135" evidence="2"/>
<dbReference type="EMBL" id="CP000950">
    <property type="protein sequence ID" value="ACA68721.1"/>
    <property type="molecule type" value="Genomic_DNA"/>
</dbReference>
<dbReference type="SMR" id="B1JP35"/>
<dbReference type="KEGG" id="ypy:YPK_2444"/>
<dbReference type="PATRIC" id="fig|502800.11.peg.3132"/>
<dbReference type="GO" id="GO:0005829">
    <property type="term" value="C:cytosol"/>
    <property type="evidence" value="ECO:0007669"/>
    <property type="project" value="TreeGrafter"/>
</dbReference>
<dbReference type="GO" id="GO:0016813">
    <property type="term" value="F:hydrolase activity, acting on carbon-nitrogen (but not peptide) bonds, in linear amidines"/>
    <property type="evidence" value="ECO:0007669"/>
    <property type="project" value="UniProtKB-UniRule"/>
</dbReference>
<dbReference type="GO" id="GO:0106251">
    <property type="term" value="F:N4-acetylcytidine amidohydrolase activity"/>
    <property type="evidence" value="ECO:0007669"/>
    <property type="project" value="RHEA"/>
</dbReference>
<dbReference type="CDD" id="cd06552">
    <property type="entry name" value="ASCH_yqfb_like"/>
    <property type="match status" value="1"/>
</dbReference>
<dbReference type="FunFam" id="2.30.130.30:FF:000001">
    <property type="entry name" value="UPF0267 protein YqfB"/>
    <property type="match status" value="1"/>
</dbReference>
<dbReference type="Gene3D" id="2.30.130.30">
    <property type="entry name" value="Hypothetical protein"/>
    <property type="match status" value="1"/>
</dbReference>
<dbReference type="HAMAP" id="MF_00684">
    <property type="entry name" value="ac4C_amidohydr"/>
    <property type="match status" value="1"/>
</dbReference>
<dbReference type="InterPro" id="IPR008314">
    <property type="entry name" value="AC4CH"/>
</dbReference>
<dbReference type="InterPro" id="IPR007374">
    <property type="entry name" value="ASCH_domain"/>
</dbReference>
<dbReference type="InterPro" id="IPR015947">
    <property type="entry name" value="PUA-like_sf"/>
</dbReference>
<dbReference type="NCBIfam" id="NF003443">
    <property type="entry name" value="PRK04980.1"/>
    <property type="match status" value="1"/>
</dbReference>
<dbReference type="PANTHER" id="PTHR38088">
    <property type="entry name" value="UCP029143 FAMILY PROTEIN"/>
    <property type="match status" value="1"/>
</dbReference>
<dbReference type="PANTHER" id="PTHR38088:SF2">
    <property type="entry name" value="UCP029143 FAMILY PROTEIN"/>
    <property type="match status" value="1"/>
</dbReference>
<dbReference type="Pfam" id="PF04266">
    <property type="entry name" value="ASCH"/>
    <property type="match status" value="1"/>
</dbReference>
<dbReference type="PIRSF" id="PIRSF029143">
    <property type="entry name" value="UCP029143"/>
    <property type="match status" value="1"/>
</dbReference>
<dbReference type="SMART" id="SM01022">
    <property type="entry name" value="ASCH"/>
    <property type="match status" value="1"/>
</dbReference>
<dbReference type="SUPFAM" id="SSF88697">
    <property type="entry name" value="PUA domain-like"/>
    <property type="match status" value="1"/>
</dbReference>
<name>AC4CH_YERPY</name>
<accession>B1JP35</accession>
<evidence type="ECO:0000255" key="1"/>
<evidence type="ECO:0000255" key="2">
    <source>
        <dbReference type="HAMAP-Rule" id="MF_00684"/>
    </source>
</evidence>
<sequence>MNREITFFGRFEADILADRKTITIRDSSESDFRSGEVLRVCRNEDGVFFCHIKVKSVTPVTLDGLSERHAEQENMSLDELKKVIKAIYPGLDRFYVIEFTRC</sequence>
<keyword id="KW-0378">Hydrolase</keyword>
<comment type="function">
    <text evidence="2">Catalyzes the hydrolysis of N(4)-acetylcytidine (ac4C).</text>
</comment>
<comment type="catalytic activity">
    <reaction evidence="2">
        <text>N(4)-acetylcytidine + H2O = cytidine + acetate + H(+)</text>
        <dbReference type="Rhea" id="RHEA:62932"/>
        <dbReference type="ChEBI" id="CHEBI:15377"/>
        <dbReference type="ChEBI" id="CHEBI:15378"/>
        <dbReference type="ChEBI" id="CHEBI:17562"/>
        <dbReference type="ChEBI" id="CHEBI:30089"/>
        <dbReference type="ChEBI" id="CHEBI:70989"/>
        <dbReference type="EC" id="3.5.1.135"/>
    </reaction>
</comment>
<comment type="catalytic activity">
    <reaction evidence="2">
        <text>N(4)-acetyl-2'-deoxycytidine + H2O = 2'-deoxycytidine + acetate + H(+)</text>
        <dbReference type="Rhea" id="RHEA:62936"/>
        <dbReference type="ChEBI" id="CHEBI:15377"/>
        <dbReference type="ChEBI" id="CHEBI:15378"/>
        <dbReference type="ChEBI" id="CHEBI:15698"/>
        <dbReference type="ChEBI" id="CHEBI:30089"/>
        <dbReference type="ChEBI" id="CHEBI:146133"/>
        <dbReference type="EC" id="3.5.1.135"/>
    </reaction>
</comment>
<comment type="catalytic activity">
    <reaction evidence="2">
        <text>N(4)-acetylcytosine + H2O = cytosine + acetate + H(+)</text>
        <dbReference type="Rhea" id="RHEA:62940"/>
        <dbReference type="ChEBI" id="CHEBI:15377"/>
        <dbReference type="ChEBI" id="CHEBI:15378"/>
        <dbReference type="ChEBI" id="CHEBI:16040"/>
        <dbReference type="ChEBI" id="CHEBI:30089"/>
        <dbReference type="ChEBI" id="CHEBI:146134"/>
        <dbReference type="EC" id="3.5.1.135"/>
    </reaction>
</comment>
<comment type="similarity">
    <text evidence="2">Belongs to the N(4)-acetylcytidine amidohydrolase family.</text>
</comment>
<organism>
    <name type="scientific">Yersinia pseudotuberculosis serotype O:3 (strain YPIII)</name>
    <dbReference type="NCBI Taxonomy" id="502800"/>
    <lineage>
        <taxon>Bacteria</taxon>
        <taxon>Pseudomonadati</taxon>
        <taxon>Pseudomonadota</taxon>
        <taxon>Gammaproteobacteria</taxon>
        <taxon>Enterobacterales</taxon>
        <taxon>Yersiniaceae</taxon>
        <taxon>Yersinia</taxon>
    </lineage>
</organism>